<gene>
    <name type="primary">RPT4B</name>
    <name type="ordered locus">At1g45000</name>
    <name type="ORF">F27F5.8</name>
</gene>
<sequence length="399" mass="44756">MSDGDDAARRRTAAVTDYRKKLLHHKELESRVRTARENLRAAKKEFNKTEDDLKSLQSVGQIIGEVLRPLDNERLIVKASSGPRYVVGCRSKVDKEKLTSGTRVVLDMTTLTIMRALPREVDPVVYNMLHEDPGNISYSAVGGLGDQIRELRESIELPLMNPELFLRVGIKPPKGVLLYGPPGTGKTLLARAIASNIDANFLKVVSSAIIDKYIGESARLIREMFNYAREHQPCIIFMDEIDAIGGRRFSEGTSADREIQRTLMELLNQLDGFDQLGKVKMIMATNRPDVLDPALLRPGRLDRKIEIPLPNEQSRMEILKIHASGIAKHGEIDYEAIVKLGEGFNGADLRNICTEAGMFAIRAERDYVIHEDFMKAVRKLSEAKKLESSSHYNADFGKE</sequence>
<dbReference type="EMBL" id="AC007915">
    <property type="protein sequence ID" value="AAF69154.1"/>
    <property type="molecule type" value="Genomic_DNA"/>
</dbReference>
<dbReference type="EMBL" id="CP002684">
    <property type="protein sequence ID" value="AEE32072.1"/>
    <property type="molecule type" value="Genomic_DNA"/>
</dbReference>
<dbReference type="EMBL" id="AY062709">
    <property type="protein sequence ID" value="AAL32787.1"/>
    <property type="molecule type" value="mRNA"/>
</dbReference>
<dbReference type="EMBL" id="AY114673">
    <property type="protein sequence ID" value="AAM47992.1"/>
    <property type="molecule type" value="mRNA"/>
</dbReference>
<dbReference type="RefSeq" id="NP_175120.1">
    <molecule id="Q9MAK9-1"/>
    <property type="nucleotide sequence ID" value="NM_103580.5"/>
</dbReference>
<dbReference type="SMR" id="Q9MAK9"/>
<dbReference type="BioGRID" id="26290">
    <property type="interactions" value="79"/>
</dbReference>
<dbReference type="FunCoup" id="Q9MAK9">
    <property type="interactions" value="4612"/>
</dbReference>
<dbReference type="IntAct" id="Q9MAK9">
    <property type="interactions" value="4"/>
</dbReference>
<dbReference type="STRING" id="3702.Q9MAK9"/>
<dbReference type="iPTMnet" id="Q9MAK9"/>
<dbReference type="PaxDb" id="3702-AT1G45000.1"/>
<dbReference type="ProteomicsDB" id="226299">
    <molecule id="Q9MAK9-1"/>
</dbReference>
<dbReference type="EnsemblPlants" id="AT1G45000.1">
    <molecule id="Q9MAK9-1"/>
    <property type="protein sequence ID" value="AT1G45000.1"/>
    <property type="gene ID" value="AT1G45000"/>
</dbReference>
<dbReference type="GeneID" id="841065"/>
<dbReference type="Gramene" id="AT1G45000.1">
    <molecule id="Q9MAK9-1"/>
    <property type="protein sequence ID" value="AT1G45000.1"/>
    <property type="gene ID" value="AT1G45000"/>
</dbReference>
<dbReference type="KEGG" id="ath:AT1G45000"/>
<dbReference type="Araport" id="AT1G45000"/>
<dbReference type="TAIR" id="AT1G45000"/>
<dbReference type="eggNOG" id="KOG0651">
    <property type="taxonomic scope" value="Eukaryota"/>
</dbReference>
<dbReference type="HOGENOM" id="CLU_000688_2_2_1"/>
<dbReference type="InParanoid" id="Q9MAK9"/>
<dbReference type="OMA" id="HYSANFG"/>
<dbReference type="OrthoDB" id="881637at2759"/>
<dbReference type="PhylomeDB" id="Q9MAK9"/>
<dbReference type="CD-CODE" id="4299E36E">
    <property type="entry name" value="Nucleolus"/>
</dbReference>
<dbReference type="PRO" id="PR:Q9MAK9"/>
<dbReference type="Proteomes" id="UP000006548">
    <property type="component" value="Chromosome 1"/>
</dbReference>
<dbReference type="ExpressionAtlas" id="Q9MAK9">
    <property type="expression patterns" value="baseline and differential"/>
</dbReference>
<dbReference type="GO" id="GO:0005737">
    <property type="term" value="C:cytoplasm"/>
    <property type="evidence" value="ECO:0007669"/>
    <property type="project" value="UniProtKB-SubCell"/>
</dbReference>
<dbReference type="GO" id="GO:0005730">
    <property type="term" value="C:nucleolus"/>
    <property type="evidence" value="ECO:0007005"/>
    <property type="project" value="TAIR"/>
</dbReference>
<dbReference type="GO" id="GO:0005634">
    <property type="term" value="C:nucleus"/>
    <property type="evidence" value="ECO:0007005"/>
    <property type="project" value="TAIR"/>
</dbReference>
<dbReference type="GO" id="GO:0009505">
    <property type="term" value="C:plant-type cell wall"/>
    <property type="evidence" value="ECO:0007005"/>
    <property type="project" value="TAIR"/>
</dbReference>
<dbReference type="GO" id="GO:0009506">
    <property type="term" value="C:plasmodesma"/>
    <property type="evidence" value="ECO:0007005"/>
    <property type="project" value="TAIR"/>
</dbReference>
<dbReference type="GO" id="GO:0000502">
    <property type="term" value="C:proteasome complex"/>
    <property type="evidence" value="ECO:0000314"/>
    <property type="project" value="TAIR"/>
</dbReference>
<dbReference type="GO" id="GO:0005524">
    <property type="term" value="F:ATP binding"/>
    <property type="evidence" value="ECO:0007669"/>
    <property type="project" value="UniProtKB-KW"/>
</dbReference>
<dbReference type="GO" id="GO:0016887">
    <property type="term" value="F:ATP hydrolysis activity"/>
    <property type="evidence" value="ECO:0007669"/>
    <property type="project" value="InterPro"/>
</dbReference>
<dbReference type="FunFam" id="1.10.8.60:FF:000008">
    <property type="entry name" value="26S protease regulatory subunit 10B"/>
    <property type="match status" value="1"/>
</dbReference>
<dbReference type="FunFam" id="2.40.50.140:FF:000027">
    <property type="entry name" value="26S protease regulatory subunit 10B"/>
    <property type="match status" value="1"/>
</dbReference>
<dbReference type="FunFam" id="3.40.50.300:FF:000034">
    <property type="entry name" value="26S protease regulatory subunit 10B"/>
    <property type="match status" value="1"/>
</dbReference>
<dbReference type="Gene3D" id="1.10.8.60">
    <property type="match status" value="1"/>
</dbReference>
<dbReference type="Gene3D" id="2.40.50.140">
    <property type="entry name" value="Nucleic acid-binding proteins"/>
    <property type="match status" value="1"/>
</dbReference>
<dbReference type="Gene3D" id="3.40.50.300">
    <property type="entry name" value="P-loop containing nucleotide triphosphate hydrolases"/>
    <property type="match status" value="1"/>
</dbReference>
<dbReference type="InterPro" id="IPR050221">
    <property type="entry name" value="26S_Proteasome_ATPase"/>
</dbReference>
<dbReference type="InterPro" id="IPR003593">
    <property type="entry name" value="AAA+_ATPase"/>
</dbReference>
<dbReference type="InterPro" id="IPR041569">
    <property type="entry name" value="AAA_lid_3"/>
</dbReference>
<dbReference type="InterPro" id="IPR003959">
    <property type="entry name" value="ATPase_AAA_core"/>
</dbReference>
<dbReference type="InterPro" id="IPR003960">
    <property type="entry name" value="ATPase_AAA_CS"/>
</dbReference>
<dbReference type="InterPro" id="IPR012340">
    <property type="entry name" value="NA-bd_OB-fold"/>
</dbReference>
<dbReference type="InterPro" id="IPR027417">
    <property type="entry name" value="P-loop_NTPase"/>
</dbReference>
<dbReference type="InterPro" id="IPR032501">
    <property type="entry name" value="Prot_ATP_ID_OB_2nd"/>
</dbReference>
<dbReference type="PANTHER" id="PTHR23073">
    <property type="entry name" value="26S PROTEASOME REGULATORY SUBUNIT"/>
    <property type="match status" value="1"/>
</dbReference>
<dbReference type="Pfam" id="PF00004">
    <property type="entry name" value="AAA"/>
    <property type="match status" value="1"/>
</dbReference>
<dbReference type="Pfam" id="PF17862">
    <property type="entry name" value="AAA_lid_3"/>
    <property type="match status" value="1"/>
</dbReference>
<dbReference type="Pfam" id="PF16450">
    <property type="entry name" value="Prot_ATP_ID_OB_C"/>
    <property type="match status" value="1"/>
</dbReference>
<dbReference type="SMART" id="SM00382">
    <property type="entry name" value="AAA"/>
    <property type="match status" value="1"/>
</dbReference>
<dbReference type="SUPFAM" id="SSF52540">
    <property type="entry name" value="P-loop containing nucleoside triphosphate hydrolases"/>
    <property type="match status" value="1"/>
</dbReference>
<dbReference type="PROSITE" id="PS00674">
    <property type="entry name" value="AAA"/>
    <property type="match status" value="1"/>
</dbReference>
<accession>Q9MAK9</accession>
<reference key="1">
    <citation type="journal article" date="2000" name="Nature">
        <title>Sequence and analysis of chromosome 1 of the plant Arabidopsis thaliana.</title>
        <authorList>
            <person name="Theologis A."/>
            <person name="Ecker J.R."/>
            <person name="Palm C.J."/>
            <person name="Federspiel N.A."/>
            <person name="Kaul S."/>
            <person name="White O."/>
            <person name="Alonso J."/>
            <person name="Altafi H."/>
            <person name="Araujo R."/>
            <person name="Bowman C.L."/>
            <person name="Brooks S.Y."/>
            <person name="Buehler E."/>
            <person name="Chan A."/>
            <person name="Chao Q."/>
            <person name="Chen H."/>
            <person name="Cheuk R.F."/>
            <person name="Chin C.W."/>
            <person name="Chung M.K."/>
            <person name="Conn L."/>
            <person name="Conway A.B."/>
            <person name="Conway A.R."/>
            <person name="Creasy T.H."/>
            <person name="Dewar K."/>
            <person name="Dunn P."/>
            <person name="Etgu P."/>
            <person name="Feldblyum T.V."/>
            <person name="Feng J.-D."/>
            <person name="Fong B."/>
            <person name="Fujii C.Y."/>
            <person name="Gill J.E."/>
            <person name="Goldsmith A.D."/>
            <person name="Haas B."/>
            <person name="Hansen N.F."/>
            <person name="Hughes B."/>
            <person name="Huizar L."/>
            <person name="Hunter J.L."/>
            <person name="Jenkins J."/>
            <person name="Johnson-Hopson C."/>
            <person name="Khan S."/>
            <person name="Khaykin E."/>
            <person name="Kim C.J."/>
            <person name="Koo H.L."/>
            <person name="Kremenetskaia I."/>
            <person name="Kurtz D.B."/>
            <person name="Kwan A."/>
            <person name="Lam B."/>
            <person name="Langin-Hooper S."/>
            <person name="Lee A."/>
            <person name="Lee J.M."/>
            <person name="Lenz C.A."/>
            <person name="Li J.H."/>
            <person name="Li Y.-P."/>
            <person name="Lin X."/>
            <person name="Liu S.X."/>
            <person name="Liu Z.A."/>
            <person name="Luros J.S."/>
            <person name="Maiti R."/>
            <person name="Marziali A."/>
            <person name="Militscher J."/>
            <person name="Miranda M."/>
            <person name="Nguyen M."/>
            <person name="Nierman W.C."/>
            <person name="Osborne B.I."/>
            <person name="Pai G."/>
            <person name="Peterson J."/>
            <person name="Pham P.K."/>
            <person name="Rizzo M."/>
            <person name="Rooney T."/>
            <person name="Rowley D."/>
            <person name="Sakano H."/>
            <person name="Salzberg S.L."/>
            <person name="Schwartz J.R."/>
            <person name="Shinn P."/>
            <person name="Southwick A.M."/>
            <person name="Sun H."/>
            <person name="Tallon L.J."/>
            <person name="Tambunga G."/>
            <person name="Toriumi M.J."/>
            <person name="Town C.D."/>
            <person name="Utterback T."/>
            <person name="Van Aken S."/>
            <person name="Vaysberg M."/>
            <person name="Vysotskaia V.S."/>
            <person name="Walker M."/>
            <person name="Wu D."/>
            <person name="Yu G."/>
            <person name="Fraser C.M."/>
            <person name="Venter J.C."/>
            <person name="Davis R.W."/>
        </authorList>
    </citation>
    <scope>NUCLEOTIDE SEQUENCE [LARGE SCALE GENOMIC DNA]</scope>
    <source>
        <strain>cv. Columbia</strain>
    </source>
</reference>
<reference key="2">
    <citation type="journal article" date="2017" name="Plant J.">
        <title>Araport11: a complete reannotation of the Arabidopsis thaliana reference genome.</title>
        <authorList>
            <person name="Cheng C.Y."/>
            <person name="Krishnakumar V."/>
            <person name="Chan A.P."/>
            <person name="Thibaud-Nissen F."/>
            <person name="Schobel S."/>
            <person name="Town C.D."/>
        </authorList>
    </citation>
    <scope>GENOME REANNOTATION</scope>
    <source>
        <strain>cv. Columbia</strain>
    </source>
</reference>
<reference key="3">
    <citation type="journal article" date="2003" name="Science">
        <title>Empirical analysis of transcriptional activity in the Arabidopsis genome.</title>
        <authorList>
            <person name="Yamada K."/>
            <person name="Lim J."/>
            <person name="Dale J.M."/>
            <person name="Chen H."/>
            <person name="Shinn P."/>
            <person name="Palm C.J."/>
            <person name="Southwick A.M."/>
            <person name="Wu H.C."/>
            <person name="Kim C.J."/>
            <person name="Nguyen M."/>
            <person name="Pham P.K."/>
            <person name="Cheuk R.F."/>
            <person name="Karlin-Newmann G."/>
            <person name="Liu S.X."/>
            <person name="Lam B."/>
            <person name="Sakano H."/>
            <person name="Wu T."/>
            <person name="Yu G."/>
            <person name="Miranda M."/>
            <person name="Quach H.L."/>
            <person name="Tripp M."/>
            <person name="Chang C.H."/>
            <person name="Lee J.M."/>
            <person name="Toriumi M.J."/>
            <person name="Chan M.M."/>
            <person name="Tang C.C."/>
            <person name="Onodera C.S."/>
            <person name="Deng J.M."/>
            <person name="Akiyama K."/>
            <person name="Ansari Y."/>
            <person name="Arakawa T."/>
            <person name="Banh J."/>
            <person name="Banno F."/>
            <person name="Bowser L."/>
            <person name="Brooks S.Y."/>
            <person name="Carninci P."/>
            <person name="Chao Q."/>
            <person name="Choy N."/>
            <person name="Enju A."/>
            <person name="Goldsmith A.D."/>
            <person name="Gurjal M."/>
            <person name="Hansen N.F."/>
            <person name="Hayashizaki Y."/>
            <person name="Johnson-Hopson C."/>
            <person name="Hsuan V.W."/>
            <person name="Iida K."/>
            <person name="Karnes M."/>
            <person name="Khan S."/>
            <person name="Koesema E."/>
            <person name="Ishida J."/>
            <person name="Jiang P.X."/>
            <person name="Jones T."/>
            <person name="Kawai J."/>
            <person name="Kamiya A."/>
            <person name="Meyers C."/>
            <person name="Nakajima M."/>
            <person name="Narusaka M."/>
            <person name="Seki M."/>
            <person name="Sakurai T."/>
            <person name="Satou M."/>
            <person name="Tamse R."/>
            <person name="Vaysberg M."/>
            <person name="Wallender E.K."/>
            <person name="Wong C."/>
            <person name="Yamamura Y."/>
            <person name="Yuan S."/>
            <person name="Shinozaki K."/>
            <person name="Davis R.W."/>
            <person name="Theologis A."/>
            <person name="Ecker J.R."/>
        </authorList>
    </citation>
    <scope>NUCLEOTIDE SEQUENCE [LARGE SCALE MRNA]</scope>
    <source>
        <strain>cv. Columbia</strain>
    </source>
</reference>
<reference key="4">
    <citation type="journal article" date="1999" name="Plant J.">
        <title>Structural and functional analysis of the six regulatory particle triple-A ATPase subunits from the Arabidopsis 26S proteasome.</title>
        <authorList>
            <person name="Fu H."/>
            <person name="Doelling J.H."/>
            <person name="Rubin D.M."/>
            <person name="Vierstra R.D."/>
        </authorList>
    </citation>
    <scope>GENE FAMILY</scope>
    <scope>NOMENCLATURE</scope>
</reference>
<reference key="5">
    <citation type="journal article" date="2004" name="J. Biol. Chem.">
        <title>Purification of the Arabidopsis 26 S proteasome: biochemical and molecular analyses revealed the presence of multiple isoforms.</title>
        <authorList>
            <person name="Yang P."/>
            <person name="Fu H."/>
            <person name="Walker J."/>
            <person name="Papa C.M."/>
            <person name="Smalle J."/>
            <person name="Ju Y.-M."/>
            <person name="Vierstra R.D."/>
        </authorList>
    </citation>
    <scope>SUBUNIT</scope>
    <scope>IDENTIFICATION BY MASS SPECTROMETRY</scope>
</reference>
<reference key="6">
    <citation type="journal article" date="2010" name="J. Biol. Chem.">
        <title>Affinity purification of the Arabidopsis 26 S proteasome reveals a diverse array of plant proteolytic complexes.</title>
        <authorList>
            <person name="Book A.J."/>
            <person name="Gladman N.P."/>
            <person name="Lee S.S."/>
            <person name="Scalf M."/>
            <person name="Smith L.M."/>
            <person name="Vierstra R.D."/>
        </authorList>
    </citation>
    <scope>IDENTIFICATION BY MASS SPECTROMETRY</scope>
    <scope>CHARACTERIZATION OF THE 26S PROTEASOME COMPLEX</scope>
    <scope>SUBUNIT</scope>
</reference>
<comment type="function">
    <text>The 26S proteasome is involved in the ATP-dependent degradation of ubiquitinated proteins. The regulatory (or ATPase) complex confers ATP dependency and substrate specificity to the 26S complex.</text>
</comment>
<comment type="subunit">
    <text evidence="4 5">Component of the 19S regulatory particle (RP/PA700) base subcomplex of the 26S proteasome. The 26S proteasome is composed of a core protease (CP), known as the 20S proteasome, capped at one or both ends by the 19S regulatory particle (RP/PA700). The RP/PA700 complex is composed of at least 17 different subunits in two subcomplexes, the base and the lid, which form the portions proximal and distal to the 20S proteolytic core, respectively.</text>
</comment>
<comment type="subcellular location">
    <subcellularLocation>
        <location evidence="1">Cytoplasm</location>
    </subcellularLocation>
    <subcellularLocation>
        <location evidence="1">Nucleus</location>
    </subcellularLocation>
</comment>
<comment type="alternative products">
    <event type="alternative splicing"/>
    <isoform>
        <id>Q9MAK9-1</id>
        <name>1</name>
        <sequence type="displayed"/>
    </isoform>
    <text>A number of isoforms are produced. According to EST sequences.</text>
</comment>
<comment type="similarity">
    <text evidence="6">Belongs to the AAA ATPase family.</text>
</comment>
<proteinExistence type="evidence at protein level"/>
<keyword id="KW-0025">Alternative splicing</keyword>
<keyword id="KW-0067">ATP-binding</keyword>
<keyword id="KW-0963">Cytoplasm</keyword>
<keyword id="KW-1017">Isopeptide bond</keyword>
<keyword id="KW-0547">Nucleotide-binding</keyword>
<keyword id="KW-0539">Nucleus</keyword>
<keyword id="KW-0647">Proteasome</keyword>
<keyword id="KW-1185">Reference proteome</keyword>
<keyword id="KW-0832">Ubl conjugation</keyword>
<protein>
    <recommendedName>
        <fullName>26S proteasome regulatory subunit S10B homolog B</fullName>
    </recommendedName>
    <alternativeName>
        <fullName>26S proteasome AAA-ATPase subunit RPT4b</fullName>
    </alternativeName>
    <alternativeName>
        <fullName>26S proteasome subunit S10B homolog B</fullName>
    </alternativeName>
    <alternativeName>
        <fullName>Regulatory particle triple-A ATPase subunit 4b</fullName>
    </alternativeName>
</protein>
<name>PS10B_ARATH</name>
<feature type="chain" id="PRO_0000391490" description="26S proteasome regulatory subunit S10B homolog B">
    <location>
        <begin position="1"/>
        <end position="399"/>
    </location>
</feature>
<feature type="binding site" evidence="3">
    <location>
        <begin position="180"/>
        <end position="187"/>
    </location>
    <ligand>
        <name>ATP</name>
        <dbReference type="ChEBI" id="CHEBI:30616"/>
    </ligand>
</feature>
<feature type="cross-link" description="Glycyl lysine isopeptide (Lys-Gly) (interchain with G-Cter in ubiquitin)" evidence="2">
    <location>
        <position position="203"/>
    </location>
</feature>
<organism>
    <name type="scientific">Arabidopsis thaliana</name>
    <name type="common">Mouse-ear cress</name>
    <dbReference type="NCBI Taxonomy" id="3702"/>
    <lineage>
        <taxon>Eukaryota</taxon>
        <taxon>Viridiplantae</taxon>
        <taxon>Streptophyta</taxon>
        <taxon>Embryophyta</taxon>
        <taxon>Tracheophyta</taxon>
        <taxon>Spermatophyta</taxon>
        <taxon>Magnoliopsida</taxon>
        <taxon>eudicotyledons</taxon>
        <taxon>Gunneridae</taxon>
        <taxon>Pentapetalae</taxon>
        <taxon>rosids</taxon>
        <taxon>malvids</taxon>
        <taxon>Brassicales</taxon>
        <taxon>Brassicaceae</taxon>
        <taxon>Camelineae</taxon>
        <taxon>Arabidopsis</taxon>
    </lineage>
</organism>
<evidence type="ECO:0000250" key="1"/>
<evidence type="ECO:0000250" key="2">
    <source>
        <dbReference type="UniProtKB" id="Q9SEI3"/>
    </source>
</evidence>
<evidence type="ECO:0000255" key="3"/>
<evidence type="ECO:0000269" key="4">
    <source>
    </source>
</evidence>
<evidence type="ECO:0000269" key="5">
    <source>
    </source>
</evidence>
<evidence type="ECO:0000305" key="6"/>